<keyword id="KW-0997">Cell inner membrane</keyword>
<keyword id="KW-1003">Cell membrane</keyword>
<keyword id="KW-0903">Direct protein sequencing</keyword>
<keyword id="KW-0418">Kinase</keyword>
<keyword id="KW-0472">Membrane</keyword>
<keyword id="KW-0597">Phosphoprotein</keyword>
<keyword id="KW-0598">Phosphotransferase system</keyword>
<keyword id="KW-1185">Reference proteome</keyword>
<keyword id="KW-0677">Repeat</keyword>
<keyword id="KW-0762">Sugar transport</keyword>
<keyword id="KW-0808">Transferase</keyword>
<keyword id="KW-0812">Transmembrane</keyword>
<keyword id="KW-1133">Transmembrane helix</keyword>
<keyword id="KW-0813">Transport</keyword>
<comment type="function">
    <text evidence="5 6 8">The phosphoenolpyruvate-dependent sugar phosphotransferase system (sugar PTS), a major carbohydrate active transport system, catalyzes the phosphorylation of incoming sugar substrates concomitantly with their translocation across the cell membrane. The enzyme II FruAB PTS system is involved in fructose transport.</text>
</comment>
<comment type="catalytic activity">
    <reaction evidence="6 9">
        <text>D-fructose(out) + N(pros)-phospho-L-histidyl-[protein] = D-fructose 1-phosphate(in) + L-histidyl-[protein]</text>
        <dbReference type="Rhea" id="RHEA:49252"/>
        <dbReference type="Rhea" id="RHEA-COMP:9745"/>
        <dbReference type="Rhea" id="RHEA-COMP:9746"/>
        <dbReference type="ChEBI" id="CHEBI:29979"/>
        <dbReference type="ChEBI" id="CHEBI:37721"/>
        <dbReference type="ChEBI" id="CHEBI:58674"/>
        <dbReference type="ChEBI" id="CHEBI:64837"/>
        <dbReference type="EC" id="2.7.1.202"/>
    </reaction>
</comment>
<comment type="biophysicochemical properties">
    <kinetics>
        <KM evidence="6">5.4 uM for fructose</KM>
    </kinetics>
</comment>
<comment type="subcellular location">
    <subcellularLocation>
        <location evidence="3 4 8">Cell inner membrane</location>
        <topology evidence="3 4 8 10">Multi-pass membrane protein</topology>
    </subcellularLocation>
</comment>
<comment type="induction">
    <text evidence="1">By fructose.</text>
</comment>
<comment type="domain">
    <text evidence="2">The PTS EIIB type-2 domain is phosphorylated by phospho-EIIA on a cysteinyl residue. Then, it transfers the phosphoryl group to the sugar substrate concomitantly with the sugar uptake processed by the PTS EIIC type-2 domain.</text>
</comment>
<comment type="domain">
    <text evidence="6">In the N-terminal, the PTS system fructose-specific possesses a duplicated EIIB domain (EIIB' domain) which lacks the active site and functions to facilitate phosphoryl transfer between the EIIA domain of diphosphoryl transfer protein (DTP) and the EIIB domain. Construction of a protein lacking the EIIB' domain shows that it is functional for fructose transport in vivo as well as fructose phosphorylation in vitro. The presence of the EIIB' domain, however, is required for normal high affinity recognition of DTP by the PTS system fructose-specific as well as for normal rates of phosphoryl transfer between the EIIA and EIIB domains of DTP and PTS system fructose-specific, respectively.</text>
</comment>
<comment type="domain">
    <text evidence="3">The EIIC type-2 domain forms the PTS system translocation channel and contains the specific substrate-binding site.</text>
</comment>
<sequence length="563" mass="57519">MKTLLIIDANLGQARAYMAKTLLGAAARKAKLEIIDNPNDAEMAIVLGDSIPNDSALNGKNVWLGDISRAVAHPELFLSEAKGHAKPYTAPVAATAPVAASGPKRVVAVTACPTGVAHTFMAAEAIETEAKKRGWWVKVETRGSVGAGNAITPEEVAAADLVIVAADIEVDLAKFAGKPMYRTSTGLALKKTAQELDKAVAEATPYEPAGKAQTATTESKKESAGAYRHLLTGVSYMLPMVVAGGLCIALSFAFGIEAFKEPGTLAAALMQIGGGSAFALMVPVLAGYIAFSIADRPGLTPGLIGGMLAVSTGSGFIGGIIAGFLAGYIAKLISTQLKLPQSMEALKPILIIPLISSLVVGLAMIYLIGKPVAGILEGLTHWLQTMGTANAVLLGAILGGMMCTDMGGPVNKAAYAFGVGLLSTQTYGPMAAIMAAGMVPPLAMGLATMVARRKFDKAQQEGGKAALVLGLCFISEGAIPFAARDPMRVLPCCIVGGALTGAISMAIGAKLMAPHGGLFVLLIPGAITPVLGYLVAIIAGTLVAGLAYAFLKRPEVDAVAKAA</sequence>
<accession>P20966</accession>
<organism>
    <name type="scientific">Escherichia coli (strain K12)</name>
    <dbReference type="NCBI Taxonomy" id="83333"/>
    <lineage>
        <taxon>Bacteria</taxon>
        <taxon>Pseudomonadati</taxon>
        <taxon>Pseudomonadota</taxon>
        <taxon>Gammaproteobacteria</taxon>
        <taxon>Enterobacterales</taxon>
        <taxon>Enterobacteriaceae</taxon>
        <taxon>Escherichia</taxon>
    </lineage>
</organism>
<feature type="chain" id="PRO_0000186508" description="PTS system fructose-specific EIIB'BC component">
    <location>
        <begin position="1"/>
        <end position="563"/>
    </location>
</feature>
<feature type="transmembrane region" description="Helical" evidence="3">
    <location>
        <begin position="236"/>
        <end position="256"/>
    </location>
</feature>
<feature type="transmembrane region" description="Helical" evidence="3">
    <location>
        <begin position="274"/>
        <end position="294"/>
    </location>
</feature>
<feature type="transmembrane region" description="Helical" evidence="3">
    <location>
        <begin position="304"/>
        <end position="324"/>
    </location>
</feature>
<feature type="transmembrane region" description="Helical" evidence="3">
    <location>
        <begin position="349"/>
        <end position="369"/>
    </location>
</feature>
<feature type="transmembrane region" description="Helical" evidence="3">
    <location>
        <begin position="382"/>
        <end position="402"/>
    </location>
</feature>
<feature type="transmembrane region" description="Helical" evidence="3">
    <location>
        <begin position="430"/>
        <end position="450"/>
    </location>
</feature>
<feature type="transmembrane region" description="Helical" evidence="3">
    <location>
        <begin position="463"/>
        <end position="483"/>
    </location>
</feature>
<feature type="transmembrane region" description="Helical" evidence="3">
    <location>
        <begin position="489"/>
        <end position="509"/>
    </location>
</feature>
<feature type="transmembrane region" description="Helical" evidence="3">
    <location>
        <begin position="518"/>
        <end position="538"/>
    </location>
</feature>
<feature type="domain" description="PTS EIIB type-2 1" evidence="10">
    <location>
        <begin position="1"/>
        <end position="85"/>
    </location>
</feature>
<feature type="domain" description="PTS EIIB type-2 2" evidence="2">
    <location>
        <begin position="104"/>
        <end position="201"/>
    </location>
</feature>
<feature type="domain" description="PTS EIIC type-2" evidence="3">
    <location>
        <begin position="226"/>
        <end position="561"/>
    </location>
</feature>
<feature type="active site" description="Phosphocysteine intermediate; for EIIB activity" evidence="6 8">
    <location>
        <position position="112"/>
    </location>
</feature>
<feature type="modified residue" description="Phosphocysteine; by EIIA" evidence="2">
    <location>
        <position position="112"/>
    </location>
</feature>
<name>PTFBC_ECOLI</name>
<proteinExistence type="evidence at protein level"/>
<reference key="1">
    <citation type="journal article" date="1988" name="J. Gen. Microbiol.">
        <title>Nucleotide sequence of fruA, the gene specifying enzyme IIfru of the phosphoenolpyruvate-dependent sugar phosphotransferase system in Escherichia coli K12.</title>
        <authorList>
            <person name="Prior T.I."/>
            <person name="Kornberg H.L."/>
        </authorList>
    </citation>
    <scope>NUCLEOTIDE SEQUENCE [GENOMIC DNA]</scope>
    <scope>PROTEIN SEQUENCE OF 1-7</scope>
    <scope>FUNCTION</scope>
    <scope>SUBCELLULAR LOCATION</scope>
    <scope>ACTIVE SITE</scope>
    <source>
        <strain>K12</strain>
    </source>
</reference>
<reference key="2">
    <citation type="submission" date="1993-10" db="EMBL/GenBank/DDBJ databases">
        <title>Automated multiplex sequencing of the E.coli genome.</title>
        <authorList>
            <person name="Richterich P."/>
            <person name="Lakey N."/>
            <person name="Gryan G."/>
            <person name="Jaehn L."/>
            <person name="Mintz L."/>
            <person name="Robison K."/>
            <person name="Church G.M."/>
        </authorList>
    </citation>
    <scope>NUCLEOTIDE SEQUENCE [LARGE SCALE GENOMIC DNA]</scope>
    <source>
        <strain>K12 / BHB2600</strain>
    </source>
</reference>
<reference key="3">
    <citation type="journal article" date="1997" name="Science">
        <title>The complete genome sequence of Escherichia coli K-12.</title>
        <authorList>
            <person name="Blattner F.R."/>
            <person name="Plunkett G. III"/>
            <person name="Bloch C.A."/>
            <person name="Perna N.T."/>
            <person name="Burland V."/>
            <person name="Riley M."/>
            <person name="Collado-Vides J."/>
            <person name="Glasner J.D."/>
            <person name="Rode C.K."/>
            <person name="Mayhew G.F."/>
            <person name="Gregor J."/>
            <person name="Davis N.W."/>
            <person name="Kirkpatrick H.A."/>
            <person name="Goeden M.A."/>
            <person name="Rose D.J."/>
            <person name="Mau B."/>
            <person name="Shao Y."/>
        </authorList>
    </citation>
    <scope>NUCLEOTIDE SEQUENCE [LARGE SCALE GENOMIC DNA]</scope>
    <source>
        <strain>K12 / MG1655 / ATCC 47076</strain>
    </source>
</reference>
<reference key="4">
    <citation type="journal article" date="2006" name="Mol. Syst. Biol.">
        <title>Highly accurate genome sequences of Escherichia coli K-12 strains MG1655 and W3110.</title>
        <authorList>
            <person name="Hayashi K."/>
            <person name="Morooka N."/>
            <person name="Yamamoto Y."/>
            <person name="Fujita K."/>
            <person name="Isono K."/>
            <person name="Choi S."/>
            <person name="Ohtsubo E."/>
            <person name="Baba T."/>
            <person name="Wanner B.L."/>
            <person name="Mori H."/>
            <person name="Horiuchi T."/>
        </authorList>
    </citation>
    <scope>NUCLEOTIDE SEQUENCE [LARGE SCALE GENOMIC DNA]</scope>
    <source>
        <strain>K12 / W3110 / ATCC 27325 / DSM 5911</strain>
    </source>
</reference>
<reference key="5">
    <citation type="journal article" date="1996" name="DNA Res.">
        <title>A 460-kb DNA sequence of the Escherichia coli K-12 genome corresponding to the 40.1-50.0 min region on the linkage map.</title>
        <authorList>
            <person name="Itoh T."/>
            <person name="Aiba H."/>
            <person name="Baba T."/>
            <person name="Fujita K."/>
            <person name="Hayashi K."/>
            <person name="Inada T."/>
            <person name="Isono K."/>
            <person name="Kasai H."/>
            <person name="Kimura S."/>
            <person name="Kitakawa M."/>
            <person name="Kitagawa M."/>
            <person name="Makino K."/>
            <person name="Miki T."/>
            <person name="Mizobuchi K."/>
            <person name="Mori H."/>
            <person name="Mori T."/>
            <person name="Motomura K."/>
            <person name="Nakade S."/>
            <person name="Nakamura Y."/>
            <person name="Nashimoto H."/>
            <person name="Nishio Y."/>
            <person name="Oshima T."/>
            <person name="Saito N."/>
            <person name="Sampei G."/>
            <person name="Seki Y."/>
            <person name="Sivasundaram S."/>
            <person name="Tagami H."/>
            <person name="Takeda J."/>
            <person name="Takemoto K."/>
            <person name="Wada C."/>
            <person name="Yamamoto Y."/>
            <person name="Horiuchi T."/>
        </authorList>
    </citation>
    <scope>NUCLEOTIDE SEQUENCE [LARGE SCALE GENOMIC DNA] OF 1-365</scope>
    <source>
        <strain>K12 / W3110 / ATCC 27325 / DSM 5911</strain>
    </source>
</reference>
<reference key="6">
    <citation type="journal article" date="1990" name="Proc. R. Soc. B">
        <title>Sequence similarities between the gene specifying 1-phosphofructokinase (fruK), genes specifying other kinases in Escherichia coli K12, and lacC of Staphylococcus aureus.</title>
        <authorList>
            <person name="Orchard L.M.D."/>
            <person name="Kornberg H.L."/>
        </authorList>
    </citation>
    <scope>NUCLEOTIDE SEQUENCE [GENOMIC DNA] OF 1-74</scope>
    <source>
        <strain>K12</strain>
    </source>
</reference>
<reference key="7">
    <citation type="journal article" date="1986" name="FEBS Lett.">
        <title>The roles of HPr and FPr in the utilization of fructose by Escherichia coli.</title>
        <authorList>
            <person name="Kornberg H."/>
        </authorList>
    </citation>
    <scope>FUNCTION</scope>
    <scope>CATALYTIC ACTIVITY</scope>
</reference>
<reference key="8">
    <citation type="journal article" date="1996" name="J. Biol. Chem.">
        <title>Function of the duplicated IIB domain and oligomeric structure of the fructose permease of Escherichia coli.</title>
        <authorList>
            <person name="Charbit A."/>
            <person name="Reizer J."/>
            <person name="Saier M.H. Jr."/>
        </authorList>
    </citation>
    <scope>FUNCTION</scope>
    <scope>CATALYTIC ACTIVITY</scope>
    <scope>BIOPHYSICOCHEMICAL PROPERTIES</scope>
    <scope>SUBCELLULAR LOCATION</scope>
    <scope>DOMAIN</scope>
    <scope>ACTIVE SITE</scope>
</reference>
<reference key="9">
    <citation type="journal article" date="2005" name="Science">
        <title>Global topology analysis of the Escherichia coli inner membrane proteome.</title>
        <authorList>
            <person name="Daley D.O."/>
            <person name="Rapp M."/>
            <person name="Granseth E."/>
            <person name="Melen K."/>
            <person name="Drew D."/>
            <person name="von Heijne G."/>
        </authorList>
    </citation>
    <scope>SUBCELLULAR LOCATION</scope>
    <source>
        <strain>K12 / MG1655 / ATCC 47076</strain>
    </source>
</reference>
<evidence type="ECO:0000250" key="1">
    <source>
        <dbReference type="UniProtKB" id="P23355"/>
    </source>
</evidence>
<evidence type="ECO:0000255" key="2">
    <source>
        <dbReference type="PROSITE-ProRule" id="PRU00422"/>
    </source>
</evidence>
<evidence type="ECO:0000255" key="3">
    <source>
        <dbReference type="PROSITE-ProRule" id="PRU00427"/>
    </source>
</evidence>
<evidence type="ECO:0000269" key="4">
    <source>
    </source>
</evidence>
<evidence type="ECO:0000269" key="5">
    <source>
    </source>
</evidence>
<evidence type="ECO:0000269" key="6">
    <source>
    </source>
</evidence>
<evidence type="ECO:0000303" key="7">
    <source>
    </source>
</evidence>
<evidence type="ECO:0000305" key="8">
    <source>
    </source>
</evidence>
<evidence type="ECO:0000305" key="9">
    <source>
    </source>
</evidence>
<evidence type="ECO:0000305" key="10">
    <source>
    </source>
</evidence>
<protein>
    <recommendedName>
        <fullName evidence="10">PTS system fructose-specific EIIB'BC component</fullName>
    </recommendedName>
    <alternativeName>
        <fullName evidence="10">EIIB'BC-Fru</fullName>
    </alternativeName>
    <domain>
        <recommendedName>
            <fullName evidence="7">PTS system fructose-specific EIIB component</fullName>
            <ecNumber evidence="6 9">2.7.1.202</ecNumber>
        </recommendedName>
        <alternativeName>
            <fullName evidence="7">EIII-Fru</fullName>
        </alternativeName>
        <alternativeName>
            <fullName evidence="7">Fructose-specific phosphotransferase enzyme IIB component</fullName>
        </alternativeName>
    </domain>
    <domain>
        <recommendedName>
            <fullName evidence="7">PTS system fructose-specific EIIC component</fullName>
        </recommendedName>
        <alternativeName>
            <fullName evidence="7">Fructose permease IIC component</fullName>
        </alternativeName>
    </domain>
</protein>
<gene>
    <name evidence="7" type="primary">fruA</name>
    <name type="synonym">ptsF</name>
    <name type="ordered locus">b2167</name>
    <name type="ordered locus">JW2154</name>
</gene>
<dbReference type="EC" id="2.7.1.202" evidence="6 9"/>
<dbReference type="EMBL" id="M23196">
    <property type="protein sequence ID" value="AAA62624.1"/>
    <property type="molecule type" value="Genomic_DNA"/>
</dbReference>
<dbReference type="EMBL" id="U00007">
    <property type="protein sequence ID" value="AAA60524.1"/>
    <property type="molecule type" value="Genomic_DNA"/>
</dbReference>
<dbReference type="EMBL" id="U00096">
    <property type="protein sequence ID" value="AAC75228.1"/>
    <property type="molecule type" value="Genomic_DNA"/>
</dbReference>
<dbReference type="EMBL" id="AP009048">
    <property type="protein sequence ID" value="BAA15976.2"/>
    <property type="molecule type" value="Genomic_DNA"/>
</dbReference>
<dbReference type="EMBL" id="X53948">
    <property type="status" value="NOT_ANNOTATED_CDS"/>
    <property type="molecule type" value="Genomic_DNA"/>
</dbReference>
<dbReference type="PIR" id="A34962">
    <property type="entry name" value="A34962"/>
</dbReference>
<dbReference type="RefSeq" id="NP_416672.1">
    <property type="nucleotide sequence ID" value="NC_000913.3"/>
</dbReference>
<dbReference type="RefSeq" id="WP_000854447.1">
    <property type="nucleotide sequence ID" value="NZ_SSZK01000027.1"/>
</dbReference>
<dbReference type="SMR" id="P20966"/>
<dbReference type="BioGRID" id="4260463">
    <property type="interactions" value="43"/>
</dbReference>
<dbReference type="BioGRID" id="851014">
    <property type="interactions" value="1"/>
</dbReference>
<dbReference type="ComplexPortal" id="CPX-5941">
    <property type="entry name" value="Fructose-specific enzyme II complex"/>
</dbReference>
<dbReference type="FunCoup" id="P20966">
    <property type="interactions" value="262"/>
</dbReference>
<dbReference type="IntAct" id="P20966">
    <property type="interactions" value="2"/>
</dbReference>
<dbReference type="STRING" id="511145.b2167"/>
<dbReference type="TCDB" id="4.A.2.1.1">
    <property type="family name" value="the pts fructose-mannitol (fru) family"/>
</dbReference>
<dbReference type="jPOST" id="P20966"/>
<dbReference type="PaxDb" id="511145-b2167"/>
<dbReference type="EnsemblBacteria" id="AAC75228">
    <property type="protein sequence ID" value="AAC75228"/>
    <property type="gene ID" value="b2167"/>
</dbReference>
<dbReference type="GeneID" id="946672"/>
<dbReference type="KEGG" id="ecj:JW2154"/>
<dbReference type="KEGG" id="eco:b2167"/>
<dbReference type="KEGG" id="ecoc:C3026_12140"/>
<dbReference type="PATRIC" id="fig|1411691.4.peg.72"/>
<dbReference type="EchoBASE" id="EB0332"/>
<dbReference type="eggNOG" id="COG1299">
    <property type="taxonomic scope" value="Bacteria"/>
</dbReference>
<dbReference type="eggNOG" id="COG1445">
    <property type="taxonomic scope" value="Bacteria"/>
</dbReference>
<dbReference type="eggNOG" id="COG3925">
    <property type="taxonomic scope" value="Bacteria"/>
</dbReference>
<dbReference type="HOGENOM" id="CLU_013155_4_1_6"/>
<dbReference type="InParanoid" id="P20966"/>
<dbReference type="OMA" id="CKLMAPH"/>
<dbReference type="OrthoDB" id="9782569at2"/>
<dbReference type="PhylomeDB" id="P20966"/>
<dbReference type="BioCyc" id="EcoCyc:FRUA-MONOMER"/>
<dbReference type="BioCyc" id="MetaCyc:FRUA-MONOMER"/>
<dbReference type="SABIO-RK" id="P20966"/>
<dbReference type="PRO" id="PR:P20966"/>
<dbReference type="Proteomes" id="UP000000625">
    <property type="component" value="Chromosome"/>
</dbReference>
<dbReference type="GO" id="GO:0005886">
    <property type="term" value="C:plasma membrane"/>
    <property type="evidence" value="ECO:0000314"/>
    <property type="project" value="EcoCyc"/>
</dbReference>
<dbReference type="GO" id="GO:1902495">
    <property type="term" value="C:transmembrane transporter complex"/>
    <property type="evidence" value="ECO:0000353"/>
    <property type="project" value="ComplexPortal"/>
</dbReference>
<dbReference type="GO" id="GO:0005351">
    <property type="term" value="F:carbohydrate:proton symporter activity"/>
    <property type="evidence" value="ECO:0007669"/>
    <property type="project" value="InterPro"/>
</dbReference>
<dbReference type="GO" id="GO:0016301">
    <property type="term" value="F:kinase activity"/>
    <property type="evidence" value="ECO:0007669"/>
    <property type="project" value="UniProtKB-KW"/>
</dbReference>
<dbReference type="GO" id="GO:0022877">
    <property type="term" value="F:protein-N(PI)-phosphohistidine-fructose phosphotransferase system transporter activity"/>
    <property type="evidence" value="ECO:0007669"/>
    <property type="project" value="InterPro"/>
</dbReference>
<dbReference type="GO" id="GO:0090582">
    <property type="term" value="F:protein-phosphocysteine-D-fructose-phosphotransferase system transporter activity"/>
    <property type="evidence" value="ECO:0000315"/>
    <property type="project" value="EcoCyc"/>
</dbReference>
<dbReference type="GO" id="GO:0090563">
    <property type="term" value="F:protein-phosphocysteine-sugar phosphotransferase activity"/>
    <property type="evidence" value="ECO:0000318"/>
    <property type="project" value="GO_Central"/>
</dbReference>
<dbReference type="GO" id="GO:1990539">
    <property type="term" value="P:fructose import across plasma membrane"/>
    <property type="evidence" value="ECO:0000314"/>
    <property type="project" value="ComplexPortal"/>
</dbReference>
<dbReference type="GO" id="GO:0009401">
    <property type="term" value="P:phosphoenolpyruvate-dependent sugar phosphotransferase system"/>
    <property type="evidence" value="ECO:0000314"/>
    <property type="project" value="EcoCyc"/>
</dbReference>
<dbReference type="CDD" id="cd05569">
    <property type="entry name" value="PTS_IIB_fructose"/>
    <property type="match status" value="1"/>
</dbReference>
<dbReference type="FunFam" id="3.40.50.2300:FF:000014">
    <property type="entry name" value="PTS system fructose-like transporter subunit IIB"/>
    <property type="match status" value="1"/>
</dbReference>
<dbReference type="Gene3D" id="3.40.50.2300">
    <property type="match status" value="1"/>
</dbReference>
<dbReference type="InterPro" id="IPR050864">
    <property type="entry name" value="Bacterial_PTS_Sugar_Transport"/>
</dbReference>
<dbReference type="InterPro" id="IPR036095">
    <property type="entry name" value="PTS_EIIB-like_sf"/>
</dbReference>
<dbReference type="InterPro" id="IPR013011">
    <property type="entry name" value="PTS_EIIB_2"/>
</dbReference>
<dbReference type="InterPro" id="IPR003501">
    <property type="entry name" value="PTS_EIIB_2/3"/>
</dbReference>
<dbReference type="InterPro" id="IPR003352">
    <property type="entry name" value="PTS_EIIC"/>
</dbReference>
<dbReference type="InterPro" id="IPR013014">
    <property type="entry name" value="PTS_EIIC_2"/>
</dbReference>
<dbReference type="InterPro" id="IPR003353">
    <property type="entry name" value="PTS_IIB_fruc"/>
</dbReference>
<dbReference type="InterPro" id="IPR006327">
    <property type="entry name" value="PTS_IIC_fruc"/>
</dbReference>
<dbReference type="NCBIfam" id="TIGR00829">
    <property type="entry name" value="FRU"/>
    <property type="match status" value="1"/>
</dbReference>
<dbReference type="NCBIfam" id="NF007984">
    <property type="entry name" value="PRK10712.1"/>
    <property type="match status" value="1"/>
</dbReference>
<dbReference type="NCBIfam" id="TIGR01427">
    <property type="entry name" value="PTS_IIC_fructo"/>
    <property type="match status" value="1"/>
</dbReference>
<dbReference type="PANTHER" id="PTHR30505">
    <property type="entry name" value="FRUCTOSE-LIKE PERMEASE"/>
    <property type="match status" value="1"/>
</dbReference>
<dbReference type="PANTHER" id="PTHR30505:SF32">
    <property type="entry name" value="PTS SYSTEM FRUCTOSE-SPECIFIC EIIB'BC COMPONENT"/>
    <property type="match status" value="1"/>
</dbReference>
<dbReference type="Pfam" id="PF02378">
    <property type="entry name" value="PTS_EIIC"/>
    <property type="match status" value="1"/>
</dbReference>
<dbReference type="Pfam" id="PF02302">
    <property type="entry name" value="PTS_IIB"/>
    <property type="match status" value="1"/>
</dbReference>
<dbReference type="SUPFAM" id="SSF52794">
    <property type="entry name" value="PTS system IIB component-like"/>
    <property type="match status" value="2"/>
</dbReference>
<dbReference type="PROSITE" id="PS51099">
    <property type="entry name" value="PTS_EIIB_TYPE_2"/>
    <property type="match status" value="1"/>
</dbReference>
<dbReference type="PROSITE" id="PS51104">
    <property type="entry name" value="PTS_EIIC_TYPE_2"/>
    <property type="match status" value="1"/>
</dbReference>